<protein>
    <recommendedName>
        <fullName evidence="1">Peptide chain release factor 1</fullName>
        <shortName evidence="1">RF-1</shortName>
    </recommendedName>
</protein>
<evidence type="ECO:0000255" key="1">
    <source>
        <dbReference type="HAMAP-Rule" id="MF_00093"/>
    </source>
</evidence>
<name>RF1_ACIC1</name>
<proteinExistence type="inferred from homology"/>
<accession>A0LSK4</accession>
<reference key="1">
    <citation type="journal article" date="2009" name="Genome Res.">
        <title>Complete genome of the cellulolytic thermophile Acidothermus cellulolyticus 11B provides insights into its ecophysiological and evolutionary adaptations.</title>
        <authorList>
            <person name="Barabote R.D."/>
            <person name="Xie G."/>
            <person name="Leu D.H."/>
            <person name="Normand P."/>
            <person name="Necsulea A."/>
            <person name="Daubin V."/>
            <person name="Medigue C."/>
            <person name="Adney W.S."/>
            <person name="Xu X.C."/>
            <person name="Lapidus A."/>
            <person name="Parales R.E."/>
            <person name="Detter C."/>
            <person name="Pujic P."/>
            <person name="Bruce D."/>
            <person name="Lavire C."/>
            <person name="Challacombe J.F."/>
            <person name="Brettin T.S."/>
            <person name="Berry A.M."/>
        </authorList>
    </citation>
    <scope>NUCLEOTIDE SEQUENCE [LARGE SCALE GENOMIC DNA]</scope>
    <source>
        <strain>ATCC 43068 / DSM 8971 / 11B</strain>
    </source>
</reference>
<sequence length="364" mass="40237">MFEAVEEVLREYADLERRLADPAVHADPRTARTLGRRYAQLGPIVEAYRRWKALDADVAAAHELAAADPAFRAEIPALEAEREAVAERLRSLLAPADPNDGKDVIMQIKAGEGGEESALFAGDLLRMYLRYAERRGWKTEILDATESDLGGYKDVTVAIRADGSEGAWSRLKFEGGVHRVQRVPVTESQGRIHTSAVGVLVMPEAEEVDVQIDPNDLRIDVFRSSGPGGQSVNTTDSAVRITHLPTGIVVSCQNEKSQLQNKETALRILRSRLLALAQEEAEAQAAAQRRSQVRTVDRSERIRTYNFPENRISDHRVNYKAYNLDQVLDGDLDGVIQALVDADAAARLAAAEQDPTRPVLSRQR</sequence>
<gene>
    <name evidence="1" type="primary">prfA</name>
    <name type="ordered locus">Acel_0641</name>
</gene>
<comment type="function">
    <text evidence="1">Peptide chain release factor 1 directs the termination of translation in response to the peptide chain termination codons UAG and UAA.</text>
</comment>
<comment type="subcellular location">
    <subcellularLocation>
        <location evidence="1">Cytoplasm</location>
    </subcellularLocation>
</comment>
<comment type="PTM">
    <text evidence="1">Methylated by PrmC. Methylation increases the termination efficiency of RF1.</text>
</comment>
<comment type="similarity">
    <text evidence="1">Belongs to the prokaryotic/mitochondrial release factor family.</text>
</comment>
<dbReference type="EMBL" id="CP000481">
    <property type="protein sequence ID" value="ABK52414.1"/>
    <property type="molecule type" value="Genomic_DNA"/>
</dbReference>
<dbReference type="RefSeq" id="WP_011719477.1">
    <property type="nucleotide sequence ID" value="NC_008578.1"/>
</dbReference>
<dbReference type="SMR" id="A0LSK4"/>
<dbReference type="FunCoup" id="A0LSK4">
    <property type="interactions" value="291"/>
</dbReference>
<dbReference type="STRING" id="351607.Acel_0641"/>
<dbReference type="KEGG" id="ace:Acel_0641"/>
<dbReference type="eggNOG" id="COG0216">
    <property type="taxonomic scope" value="Bacteria"/>
</dbReference>
<dbReference type="HOGENOM" id="CLU_036856_0_1_11"/>
<dbReference type="InParanoid" id="A0LSK4"/>
<dbReference type="OrthoDB" id="9806673at2"/>
<dbReference type="Proteomes" id="UP000008221">
    <property type="component" value="Chromosome"/>
</dbReference>
<dbReference type="GO" id="GO:0005737">
    <property type="term" value="C:cytoplasm"/>
    <property type="evidence" value="ECO:0007669"/>
    <property type="project" value="UniProtKB-SubCell"/>
</dbReference>
<dbReference type="GO" id="GO:0016149">
    <property type="term" value="F:translation release factor activity, codon specific"/>
    <property type="evidence" value="ECO:0007669"/>
    <property type="project" value="UniProtKB-UniRule"/>
</dbReference>
<dbReference type="FunFam" id="3.30.160.20:FF:000004">
    <property type="entry name" value="Peptide chain release factor 1"/>
    <property type="match status" value="1"/>
</dbReference>
<dbReference type="FunFam" id="3.30.70.1660:FF:000002">
    <property type="entry name" value="Peptide chain release factor 1"/>
    <property type="match status" value="1"/>
</dbReference>
<dbReference type="Gene3D" id="3.30.160.20">
    <property type="match status" value="1"/>
</dbReference>
<dbReference type="Gene3D" id="3.30.70.1660">
    <property type="match status" value="1"/>
</dbReference>
<dbReference type="Gene3D" id="6.10.140.1950">
    <property type="match status" value="1"/>
</dbReference>
<dbReference type="HAMAP" id="MF_00093">
    <property type="entry name" value="Rel_fac_1"/>
    <property type="match status" value="1"/>
</dbReference>
<dbReference type="InterPro" id="IPR005139">
    <property type="entry name" value="PCRF"/>
</dbReference>
<dbReference type="InterPro" id="IPR000352">
    <property type="entry name" value="Pep_chain_release_fac_I"/>
</dbReference>
<dbReference type="InterPro" id="IPR045853">
    <property type="entry name" value="Pep_chain_release_fac_I_sf"/>
</dbReference>
<dbReference type="InterPro" id="IPR050057">
    <property type="entry name" value="Prokaryotic/Mito_RF"/>
</dbReference>
<dbReference type="InterPro" id="IPR004373">
    <property type="entry name" value="RF-1"/>
</dbReference>
<dbReference type="NCBIfam" id="TIGR00019">
    <property type="entry name" value="prfA"/>
    <property type="match status" value="1"/>
</dbReference>
<dbReference type="NCBIfam" id="NF001859">
    <property type="entry name" value="PRK00591.1"/>
    <property type="match status" value="1"/>
</dbReference>
<dbReference type="PANTHER" id="PTHR43804">
    <property type="entry name" value="LD18447P"/>
    <property type="match status" value="1"/>
</dbReference>
<dbReference type="PANTHER" id="PTHR43804:SF7">
    <property type="entry name" value="LD18447P"/>
    <property type="match status" value="1"/>
</dbReference>
<dbReference type="Pfam" id="PF03462">
    <property type="entry name" value="PCRF"/>
    <property type="match status" value="1"/>
</dbReference>
<dbReference type="Pfam" id="PF00472">
    <property type="entry name" value="RF-1"/>
    <property type="match status" value="1"/>
</dbReference>
<dbReference type="SMART" id="SM00937">
    <property type="entry name" value="PCRF"/>
    <property type="match status" value="1"/>
</dbReference>
<dbReference type="SUPFAM" id="SSF75620">
    <property type="entry name" value="Release factor"/>
    <property type="match status" value="1"/>
</dbReference>
<dbReference type="PROSITE" id="PS00745">
    <property type="entry name" value="RF_PROK_I"/>
    <property type="match status" value="1"/>
</dbReference>
<organism>
    <name type="scientific">Acidothermus cellulolyticus (strain ATCC 43068 / DSM 8971 / 11B)</name>
    <dbReference type="NCBI Taxonomy" id="351607"/>
    <lineage>
        <taxon>Bacteria</taxon>
        <taxon>Bacillati</taxon>
        <taxon>Actinomycetota</taxon>
        <taxon>Actinomycetes</taxon>
        <taxon>Acidothermales</taxon>
        <taxon>Acidothermaceae</taxon>
        <taxon>Acidothermus</taxon>
    </lineage>
</organism>
<keyword id="KW-0963">Cytoplasm</keyword>
<keyword id="KW-0488">Methylation</keyword>
<keyword id="KW-0648">Protein biosynthesis</keyword>
<keyword id="KW-1185">Reference proteome</keyword>
<feature type="chain" id="PRO_1000004852" description="Peptide chain release factor 1">
    <location>
        <begin position="1"/>
        <end position="364"/>
    </location>
</feature>
<feature type="modified residue" description="N5-methylglutamine" evidence="1">
    <location>
        <position position="230"/>
    </location>
</feature>